<accession>B1JEP3</accession>
<name>MURI_PSEPW</name>
<comment type="function">
    <text evidence="1">Provides the (R)-glutamate required for cell wall biosynthesis.</text>
</comment>
<comment type="catalytic activity">
    <reaction evidence="1">
        <text>L-glutamate = D-glutamate</text>
        <dbReference type="Rhea" id="RHEA:12813"/>
        <dbReference type="ChEBI" id="CHEBI:29985"/>
        <dbReference type="ChEBI" id="CHEBI:29986"/>
        <dbReference type="EC" id="5.1.1.3"/>
    </reaction>
</comment>
<comment type="pathway">
    <text evidence="1">Cell wall biogenesis; peptidoglycan biosynthesis.</text>
</comment>
<comment type="similarity">
    <text evidence="1">Belongs to the aspartate/glutamate racemases family.</text>
</comment>
<dbReference type="EC" id="5.1.1.3" evidence="1"/>
<dbReference type="EMBL" id="CP000949">
    <property type="protein sequence ID" value="ACA74933.1"/>
    <property type="molecule type" value="Genomic_DNA"/>
</dbReference>
<dbReference type="SMR" id="B1JEP3"/>
<dbReference type="STRING" id="390235.PputW619_4453"/>
<dbReference type="KEGG" id="ppw:PputW619_4453"/>
<dbReference type="eggNOG" id="COG0796">
    <property type="taxonomic scope" value="Bacteria"/>
</dbReference>
<dbReference type="HOGENOM" id="CLU_052344_1_0_6"/>
<dbReference type="OrthoDB" id="9801055at2"/>
<dbReference type="UniPathway" id="UPA00219"/>
<dbReference type="GO" id="GO:0008881">
    <property type="term" value="F:glutamate racemase activity"/>
    <property type="evidence" value="ECO:0007669"/>
    <property type="project" value="UniProtKB-UniRule"/>
</dbReference>
<dbReference type="GO" id="GO:0071555">
    <property type="term" value="P:cell wall organization"/>
    <property type="evidence" value="ECO:0007669"/>
    <property type="project" value="UniProtKB-KW"/>
</dbReference>
<dbReference type="GO" id="GO:0009252">
    <property type="term" value="P:peptidoglycan biosynthetic process"/>
    <property type="evidence" value="ECO:0007669"/>
    <property type="project" value="UniProtKB-UniRule"/>
</dbReference>
<dbReference type="GO" id="GO:0008360">
    <property type="term" value="P:regulation of cell shape"/>
    <property type="evidence" value="ECO:0007669"/>
    <property type="project" value="UniProtKB-KW"/>
</dbReference>
<dbReference type="FunFam" id="3.40.50.1860:FF:000001">
    <property type="entry name" value="Glutamate racemase"/>
    <property type="match status" value="1"/>
</dbReference>
<dbReference type="Gene3D" id="3.40.50.1860">
    <property type="match status" value="2"/>
</dbReference>
<dbReference type="HAMAP" id="MF_00258">
    <property type="entry name" value="Glu_racemase"/>
    <property type="match status" value="1"/>
</dbReference>
<dbReference type="InterPro" id="IPR015942">
    <property type="entry name" value="Asp/Glu/hydantoin_racemase"/>
</dbReference>
<dbReference type="InterPro" id="IPR001920">
    <property type="entry name" value="Asp/Glu_race"/>
</dbReference>
<dbReference type="InterPro" id="IPR018187">
    <property type="entry name" value="Asp/Glu_racemase_AS_1"/>
</dbReference>
<dbReference type="InterPro" id="IPR033134">
    <property type="entry name" value="Asp/Glu_racemase_AS_2"/>
</dbReference>
<dbReference type="InterPro" id="IPR004391">
    <property type="entry name" value="Glu_race"/>
</dbReference>
<dbReference type="NCBIfam" id="TIGR00067">
    <property type="entry name" value="glut_race"/>
    <property type="match status" value="1"/>
</dbReference>
<dbReference type="PANTHER" id="PTHR21198">
    <property type="entry name" value="GLUTAMATE RACEMASE"/>
    <property type="match status" value="1"/>
</dbReference>
<dbReference type="PANTHER" id="PTHR21198:SF2">
    <property type="entry name" value="GLUTAMATE RACEMASE"/>
    <property type="match status" value="1"/>
</dbReference>
<dbReference type="Pfam" id="PF01177">
    <property type="entry name" value="Asp_Glu_race"/>
    <property type="match status" value="1"/>
</dbReference>
<dbReference type="SUPFAM" id="SSF53681">
    <property type="entry name" value="Aspartate/glutamate racemase"/>
    <property type="match status" value="2"/>
</dbReference>
<dbReference type="PROSITE" id="PS00923">
    <property type="entry name" value="ASP_GLU_RACEMASE_1"/>
    <property type="match status" value="1"/>
</dbReference>
<dbReference type="PROSITE" id="PS00924">
    <property type="entry name" value="ASP_GLU_RACEMASE_2"/>
    <property type="match status" value="1"/>
</dbReference>
<proteinExistence type="inferred from homology"/>
<organism>
    <name type="scientific">Pseudomonas putida (strain W619)</name>
    <dbReference type="NCBI Taxonomy" id="390235"/>
    <lineage>
        <taxon>Bacteria</taxon>
        <taxon>Pseudomonadati</taxon>
        <taxon>Pseudomonadota</taxon>
        <taxon>Gammaproteobacteria</taxon>
        <taxon>Pseudomonadales</taxon>
        <taxon>Pseudomonadaceae</taxon>
        <taxon>Pseudomonas</taxon>
    </lineage>
</organism>
<gene>
    <name evidence="1" type="primary">murI</name>
    <name type="ordered locus">PputW619_4453</name>
</gene>
<protein>
    <recommendedName>
        <fullName evidence="1">Glutamate racemase</fullName>
        <ecNumber evidence="1">5.1.1.3</ecNumber>
    </recommendedName>
</protein>
<evidence type="ECO:0000255" key="1">
    <source>
        <dbReference type="HAMAP-Rule" id="MF_00258"/>
    </source>
</evidence>
<sequence length="265" mass="28203">MAERSAPVGVMDSGVGGLSVLAEIQRLLPSESLLYVADCGHVPYGEKTPDYIRQRCRRIAEFFQAQGAKAMVLACNTATVAAVADLRERYPDWPLVGMEPAVKPAAAATRSGVVGVLATTGTLQSAKFAALLDRFANDVRVVTQPCPGLVELIETGDLGSLQLRQLLLGYVQPLLAAGCDTLILGCTHYPFLRPLLAGMVPADVAIIDTGAAVARQLKRLLAARELLADGPARDAAFWSSADPRSLENILPVLWNTSGSVQRLQL</sequence>
<reference key="1">
    <citation type="submission" date="2008-02" db="EMBL/GenBank/DDBJ databases">
        <title>Complete sequence of Pseudomonas putida W619.</title>
        <authorList>
            <person name="Copeland A."/>
            <person name="Lucas S."/>
            <person name="Lapidus A."/>
            <person name="Barry K."/>
            <person name="Detter J.C."/>
            <person name="Glavina del Rio T."/>
            <person name="Dalin E."/>
            <person name="Tice H."/>
            <person name="Pitluck S."/>
            <person name="Chain P."/>
            <person name="Malfatti S."/>
            <person name="Shin M."/>
            <person name="Vergez L."/>
            <person name="Schmutz J."/>
            <person name="Larimer F."/>
            <person name="Land M."/>
            <person name="Hauser L."/>
            <person name="Kyrpides N."/>
            <person name="Kim E."/>
            <person name="Taghavi S."/>
            <person name="Vangronsveld D."/>
            <person name="van der Lelie D."/>
            <person name="Richardson P."/>
        </authorList>
    </citation>
    <scope>NUCLEOTIDE SEQUENCE [LARGE SCALE GENOMIC DNA]</scope>
    <source>
        <strain>W619</strain>
    </source>
</reference>
<keyword id="KW-0133">Cell shape</keyword>
<keyword id="KW-0961">Cell wall biogenesis/degradation</keyword>
<keyword id="KW-0413">Isomerase</keyword>
<keyword id="KW-0573">Peptidoglycan synthesis</keyword>
<feature type="chain" id="PRO_1000114059" description="Glutamate racemase">
    <location>
        <begin position="1"/>
        <end position="265"/>
    </location>
</feature>
<feature type="active site" description="Proton donor/acceptor" evidence="1">
    <location>
        <position position="75"/>
    </location>
</feature>
<feature type="active site" description="Proton donor/acceptor" evidence="1">
    <location>
        <position position="186"/>
    </location>
</feature>
<feature type="binding site" evidence="1">
    <location>
        <begin position="12"/>
        <end position="13"/>
    </location>
    <ligand>
        <name>substrate</name>
    </ligand>
</feature>
<feature type="binding site" evidence="1">
    <location>
        <begin position="44"/>
        <end position="45"/>
    </location>
    <ligand>
        <name>substrate</name>
    </ligand>
</feature>
<feature type="binding site" evidence="1">
    <location>
        <begin position="76"/>
        <end position="77"/>
    </location>
    <ligand>
        <name>substrate</name>
    </ligand>
</feature>
<feature type="binding site" evidence="1">
    <location>
        <begin position="187"/>
        <end position="188"/>
    </location>
    <ligand>
        <name>substrate</name>
    </ligand>
</feature>